<dbReference type="EMBL" id="CP000847">
    <property type="protein sequence ID" value="ABV75508.1"/>
    <property type="molecule type" value="Genomic_DNA"/>
</dbReference>
<dbReference type="RefSeq" id="WP_012150137.1">
    <property type="nucleotide sequence ID" value="NC_009881.1"/>
</dbReference>
<dbReference type="STRING" id="293614.A1C_06425"/>
<dbReference type="KEGG" id="rak:A1C_06425"/>
<dbReference type="eggNOG" id="COG3637">
    <property type="taxonomic scope" value="Bacteria"/>
</dbReference>
<dbReference type="HOGENOM" id="CLU_1146500_0_0_5"/>
<dbReference type="Proteomes" id="UP000006830">
    <property type="component" value="Chromosome"/>
</dbReference>
<dbReference type="GO" id="GO:0009279">
    <property type="term" value="C:cell outer membrane"/>
    <property type="evidence" value="ECO:0007669"/>
    <property type="project" value="InterPro"/>
</dbReference>
<dbReference type="Gene3D" id="2.40.160.20">
    <property type="match status" value="1"/>
</dbReference>
<dbReference type="InterPro" id="IPR011250">
    <property type="entry name" value="OMP/PagP_b-brl"/>
</dbReference>
<dbReference type="InterPro" id="IPR000498">
    <property type="entry name" value="OmpA-like_TM_dom"/>
</dbReference>
<dbReference type="Pfam" id="PF01389">
    <property type="entry name" value="OmpA_membrane"/>
    <property type="match status" value="1"/>
</dbReference>
<dbReference type="SUPFAM" id="SSF56925">
    <property type="entry name" value="OMPA-like"/>
    <property type="match status" value="1"/>
</dbReference>
<reference key="1">
    <citation type="submission" date="2007-09" db="EMBL/GenBank/DDBJ databases">
        <title>Complete genome sequence of Rickettsia akari.</title>
        <authorList>
            <person name="Madan A."/>
            <person name="Fahey J."/>
            <person name="Helton E."/>
            <person name="Ketteman M."/>
            <person name="Madan A."/>
            <person name="Rodrigues S."/>
            <person name="Sanchez A."/>
            <person name="Whiting M."/>
            <person name="Dasch G."/>
            <person name="Eremeeva M."/>
        </authorList>
    </citation>
    <scope>NUCLEOTIDE SEQUENCE [LARGE SCALE GENOMIC DNA]</scope>
    <source>
        <strain>Hartford</strain>
    </source>
</reference>
<name>Y6425_RICAH</name>
<feature type="signal peptide" evidence="1">
    <location>
        <begin position="1"/>
        <end position="22"/>
    </location>
</feature>
<feature type="chain" id="PRO_0000317019" description="Putative adhesin A1C_06425">
    <location>
        <begin position="23"/>
        <end position="224"/>
    </location>
</feature>
<organism>
    <name type="scientific">Rickettsia akari (strain Hartford)</name>
    <dbReference type="NCBI Taxonomy" id="293614"/>
    <lineage>
        <taxon>Bacteria</taxon>
        <taxon>Pseudomonadati</taxon>
        <taxon>Pseudomonadota</taxon>
        <taxon>Alphaproteobacteria</taxon>
        <taxon>Rickettsiales</taxon>
        <taxon>Rickettsiaceae</taxon>
        <taxon>Rickettsieae</taxon>
        <taxon>Rickettsia</taxon>
        <taxon>spotted fever group</taxon>
    </lineage>
</organism>
<protein>
    <recommendedName>
        <fullName>Putative adhesin A1C_06425</fullName>
    </recommendedName>
</protein>
<gene>
    <name type="ordered locus">A1C_06425</name>
</gene>
<accession>A8GQ33</accession>
<proteinExistence type="inferred from homology"/>
<keyword id="KW-0732">Signal</keyword>
<evidence type="ECO:0000255" key="1"/>
<sequence length="224" mass="24142">MKKLLLIATTSATILSSSISFADDMGNEWYLRVDAGAAMFNKEQDKATSVKLKSNTTVPVDLGIGYYIFENFRADLTLGTIIGGKLKASGSATHAPFTGTNVSVSHKPTITRLLINGYVDLTNFDLFDVFAGAGVGPALVKEKITYNGITGLSSNTKNRTNISYRLTLGTSAQIADGVKAELAYSWIYDGRTKSKNVIYQGTSVLTGGMRYQSHNLTAGIRFDI</sequence>